<name>VDAC3_RAT</name>
<accession>Q9R1Z0</accession>
<accession>Q6GSZ1</accession>
<accession>Q9ESR2</accession>
<accession>Q9JI31</accession>
<accession>Q9WTU2</accession>
<evidence type="ECO:0000250" key="1">
    <source>
        <dbReference type="UniProtKB" id="P21796"/>
    </source>
</evidence>
<evidence type="ECO:0000250" key="2">
    <source>
        <dbReference type="UniProtKB" id="Q60931"/>
    </source>
</evidence>
<evidence type="ECO:0000250" key="3">
    <source>
        <dbReference type="UniProtKB" id="Q9Y277"/>
    </source>
</evidence>
<evidence type="ECO:0000269" key="4">
    <source>
    </source>
</evidence>
<evidence type="ECO:0000269" key="5">
    <source>
    </source>
</evidence>
<evidence type="ECO:0000269" key="6">
    <source>
    </source>
</evidence>
<evidence type="ECO:0000303" key="7">
    <source>
    </source>
</evidence>
<evidence type="ECO:0000305" key="8"/>
<evidence type="ECO:0000312" key="9">
    <source>
        <dbReference type="RGD" id="621577"/>
    </source>
</evidence>
<proteinExistence type="evidence at protein level"/>
<gene>
    <name evidence="9" type="primary">Vdac3</name>
</gene>
<reference key="1">
    <citation type="journal article" date="2000" name="Eur. J. Biochem.">
        <title>Characterization of porin isoforms expressed in tumor cells.</title>
        <authorList>
            <person name="Shinohara Y."/>
            <person name="Ishida T."/>
            <person name="Hino M."/>
            <person name="Yamazaki N."/>
            <person name="Baba Y."/>
            <person name="Terada H."/>
        </authorList>
    </citation>
    <scope>NUCLEOTIDE SEQUENCE [MRNA] (ISOFORM 1)</scope>
    <scope>TISSUE SPECIFICITY</scope>
    <source>
        <tissue>Ascitic tumor</tissue>
    </source>
</reference>
<reference key="2">
    <citation type="submission" date="2000-05" db="EMBL/GenBank/DDBJ databases">
        <title>Ion channels in the lens.</title>
        <authorList>
            <person name="Rae J.L."/>
        </authorList>
    </citation>
    <scope>NUCLEOTIDE SEQUENCE [MRNA] (ISOFORM 1)</scope>
    <source>
        <strain>Sprague-Dawley</strain>
        <tissue>Lens</tissue>
    </source>
</reference>
<reference key="3">
    <citation type="journal article" date="2004" name="Genome Res.">
        <title>The status, quality, and expansion of the NIH full-length cDNA project: the Mammalian Gene Collection (MGC).</title>
        <authorList>
            <consortium name="The MGC Project Team"/>
        </authorList>
    </citation>
    <scope>NUCLEOTIDE SEQUENCE [LARGE SCALE MRNA] (ISOFORM 1)</scope>
    <source>
        <tissue>Prostate</tissue>
    </source>
</reference>
<reference key="4">
    <citation type="journal article" date="1998" name="Biochim. Biophys. Acta">
        <title>Characterization of rat porin isoforms: cloning of a cardiac type-3 variant encoding an additional methionine at its putative N-terminal region.</title>
        <authorList>
            <person name="Anflous K."/>
            <person name="Blondel O."/>
            <person name="Bernard A."/>
            <person name="Khrestchatisky M."/>
            <person name="Ventura-Clapier R."/>
        </authorList>
    </citation>
    <scope>NUCLEOTIDE SEQUENCE [MRNA] OF 10-283 (ISOFORMS 1 AND 2)</scope>
    <source>
        <tissue>Heart</tissue>
    </source>
</reference>
<reference key="5">
    <citation type="journal article" date="2007" name="Biochim. Biophys. Acta">
        <title>Post-translational modifications of rat liver mitochondrial outer membrane proteins identified by mass spectrometry.</title>
        <authorList>
            <person name="Distler A.M."/>
            <person name="Kerner J."/>
            <person name="Hoppel C.L."/>
        </authorList>
    </citation>
    <scope>PROTEIN SEQUENCE OF 29-34 AND 236-245</scope>
    <scope>PHOSPHORYLATION AT THR-33 AND SER-241</scope>
    <scope>IDENTIFICATION BY MASS SPECTROMETRY</scope>
    <source>
        <tissue>Liver</tissue>
    </source>
</reference>
<reference key="6">
    <citation type="submission" date="2007-09" db="UniProtKB">
        <authorList>
            <person name="Lubec G."/>
            <person name="Kang S.U."/>
            <person name="Lubec S."/>
        </authorList>
    </citation>
    <scope>PROTEIN SEQUENCE OF 54-63; 97-109 AND 257-266</scope>
    <scope>IDENTIFICATION BY MASS SPECTROMETRY</scope>
    <source>
        <strain>Sprague-Dawley</strain>
        <tissue>Brain</tissue>
    </source>
</reference>
<reference key="7">
    <citation type="journal article" date="2009" name="Reproduction">
        <title>Identification of novel immunodominant epididymal sperm proteins using combinatorial approach.</title>
        <authorList>
            <person name="Khan S.A."/>
            <person name="Suryawanshi A.R."/>
            <person name="Ranpura S.A."/>
            <person name="Jadhav S.V."/>
            <person name="Khole V.V."/>
        </authorList>
    </citation>
    <scope>IDENTIFICATION BY MASS SPECTROMETRY</scope>
    <scope>TISSUE SPECIFICITY</scope>
</reference>
<feature type="initiator methionine" description="Removed" evidence="3">
    <location>
        <position position="1"/>
    </location>
</feature>
<feature type="chain" id="PRO_0000050517" description="Non-selective voltage-gated ion channel VDAC3">
    <location>
        <begin position="2"/>
        <end position="283"/>
    </location>
</feature>
<feature type="transmembrane region" description="Beta stranded" evidence="1">
    <location>
        <begin position="26"/>
        <end position="35"/>
    </location>
</feature>
<feature type="transmembrane region" description="Beta stranded" evidence="1">
    <location>
        <begin position="39"/>
        <end position="47"/>
    </location>
</feature>
<feature type="transmembrane region" description="Beta stranded" evidence="1">
    <location>
        <begin position="54"/>
        <end position="64"/>
    </location>
</feature>
<feature type="transmembrane region" description="Beta stranded" evidence="1">
    <location>
        <begin position="69"/>
        <end position="76"/>
    </location>
</feature>
<feature type="transmembrane region" description="Beta stranded" evidence="1">
    <location>
        <begin position="80"/>
        <end position="89"/>
    </location>
</feature>
<feature type="transmembrane region" description="Beta stranded" evidence="1">
    <location>
        <begin position="95"/>
        <end position="104"/>
    </location>
</feature>
<feature type="transmembrane region" description="Beta stranded" evidence="1">
    <location>
        <begin position="111"/>
        <end position="120"/>
    </location>
</feature>
<feature type="transmembrane region" description="Beta stranded" evidence="1">
    <location>
        <begin position="123"/>
        <end position="130"/>
    </location>
</feature>
<feature type="transmembrane region" description="Beta stranded" evidence="1">
    <location>
        <begin position="137"/>
        <end position="145"/>
    </location>
</feature>
<feature type="transmembrane region" description="Beta stranded" evidence="1">
    <location>
        <begin position="150"/>
        <end position="158"/>
    </location>
</feature>
<feature type="transmembrane region" description="Beta stranded" evidence="1">
    <location>
        <begin position="163"/>
        <end position="175"/>
    </location>
</feature>
<feature type="transmembrane region" description="Beta stranded" evidence="1">
    <location>
        <begin position="178"/>
        <end position="185"/>
    </location>
</feature>
<feature type="transmembrane region" description="Beta stranded" evidence="1">
    <location>
        <begin position="189"/>
        <end position="198"/>
    </location>
</feature>
<feature type="transmembrane region" description="Beta stranded" evidence="1">
    <location>
        <begin position="202"/>
        <end position="211"/>
    </location>
</feature>
<feature type="transmembrane region" description="Beta stranded" evidence="1">
    <location>
        <begin position="218"/>
        <end position="227"/>
    </location>
</feature>
<feature type="transmembrane region" description="Beta stranded" evidence="1">
    <location>
        <begin position="231"/>
        <end position="238"/>
    </location>
</feature>
<feature type="transmembrane region" description="Beta stranded" evidence="1">
    <location>
        <begin position="242"/>
        <end position="251"/>
    </location>
</feature>
<feature type="transmembrane region" description="Beta stranded" evidence="1">
    <location>
        <begin position="254"/>
        <end position="263"/>
    </location>
</feature>
<feature type="transmembrane region" description="Beta stranded" evidence="1">
    <location>
        <begin position="273"/>
        <end position="282"/>
    </location>
</feature>
<feature type="binding site" evidence="1">
    <location>
        <begin position="242"/>
        <end position="244"/>
    </location>
    <ligand>
        <name>NAD(+)</name>
        <dbReference type="ChEBI" id="CHEBI:57540"/>
    </ligand>
</feature>
<feature type="binding site" evidence="1">
    <location>
        <begin position="260"/>
        <end position="264"/>
    </location>
    <ligand>
        <name>NAD(+)</name>
        <dbReference type="ChEBI" id="CHEBI:57540"/>
    </ligand>
</feature>
<feature type="modified residue" description="N-acetylcysteine" evidence="3">
    <location>
        <position position="2"/>
    </location>
</feature>
<feature type="modified residue" description="Phosphothreonine" evidence="3">
    <location>
        <position position="4"/>
    </location>
</feature>
<feature type="modified residue" description="N6-acetyllysine" evidence="2">
    <location>
        <position position="12"/>
    </location>
</feature>
<feature type="modified residue" description="N6-acetyllysine" evidence="2">
    <location>
        <position position="15"/>
    </location>
</feature>
<feature type="modified residue" description="N6-acetyllysine" evidence="3">
    <location>
        <position position="20"/>
    </location>
</feature>
<feature type="modified residue" description="Phosphothreonine" evidence="5">
    <location>
        <position position="33"/>
    </location>
</feature>
<feature type="modified residue" description="N6-acetyllysine" evidence="3">
    <location>
        <position position="90"/>
    </location>
</feature>
<feature type="modified residue" description="Phosphoserine" evidence="5">
    <location>
        <position position="241"/>
    </location>
</feature>
<feature type="modified residue" description="N6-acetyllysine; alternate" evidence="2">
    <location>
        <position position="266"/>
    </location>
</feature>
<feature type="cross-link" description="Glycyl lysine isopeptide (Lys-Gly) (interchain with G-Cter in ubiquitin)" evidence="3">
    <location>
        <position position="53"/>
    </location>
</feature>
<feature type="cross-link" description="Glycyl lysine isopeptide (Lys-Gly) (interchain with G-Cter in ubiquitin)" evidence="3">
    <location>
        <position position="109"/>
    </location>
</feature>
<feature type="cross-link" description="Glycyl lysine isopeptide (Lys-Gly) (interchain with G-Cter in ubiquitin)" evidence="3">
    <location>
        <position position="110"/>
    </location>
</feature>
<feature type="cross-link" description="Glycyl lysine isopeptide (Lys-Gly) (interchain with G-Cter in ubiquitin); alternate" evidence="3">
    <location>
        <position position="266"/>
    </location>
</feature>
<feature type="splice variant" id="VSP_005080" description="In isoform 2." evidence="7">
    <original>V</original>
    <variation>VM</variation>
    <location>
        <position position="39"/>
    </location>
</feature>
<feature type="sequence conflict" description="In Ref. 2; AAF80117 and 3; AAH61780." evidence="8" ref="2 3">
    <original>K</original>
    <variation>N</variation>
    <location>
        <position position="128"/>
    </location>
</feature>
<comment type="function">
    <text evidence="2 3">Non-selective voltage-gated ion channel that mediates the transport of anions and cations through the mitochondrion outer membrane and plasma membrane. Forms a high-conducting channel with a stable open state and a voltage-induced closure with a mild preference for anions over cations (By similarity). Involved in male fertility and sperm mitochondrial sheath formation (By similarity).</text>
</comment>
<comment type="catalytic activity">
    <reaction evidence="3">
        <text>chloride(in) = chloride(out)</text>
        <dbReference type="Rhea" id="RHEA:29823"/>
        <dbReference type="ChEBI" id="CHEBI:17996"/>
    </reaction>
</comment>
<comment type="catalytic activity">
    <reaction evidence="3">
        <text>K(+)(in) = K(+)(out)</text>
        <dbReference type="Rhea" id="RHEA:29463"/>
        <dbReference type="ChEBI" id="CHEBI:29103"/>
    </reaction>
</comment>
<comment type="subunit">
    <text evidence="2">Interacts with ARMC12 in a TBC1D21-dependent manner. Interacts with MISFA.</text>
</comment>
<comment type="subcellular location">
    <subcellularLocation>
        <location evidence="1">Mitochondrion outer membrane</location>
    </subcellularLocation>
    <subcellularLocation>
        <location evidence="3">Membrane</location>
    </subcellularLocation>
    <text evidence="3">May localize to non-mitochondrial membranes.</text>
</comment>
<comment type="alternative products">
    <event type="alternative splicing"/>
    <isoform>
        <id>Q9R1Z0-1</id>
        <name>1</name>
        <name>RVDAC3</name>
        <sequence type="displayed"/>
    </isoform>
    <isoform>
        <id>Q9R1Z0-2</id>
        <name>2</name>
        <name>RVDAC3V</name>
        <sequence type="described" ref="VSP_005080"/>
    </isoform>
</comment>
<comment type="tissue specificity">
    <text evidence="4 6">Isoform 1 is widely expressed with strong expression in atrium and ascitic tumor, lower levels in brain and very low levels in liver and kidney (PubMed:10998068). Isoform 2 is also widely expressed with highest levels in brain but no expression in kidney (PubMed:10998068). Also expressed in flagella of epididymal sperm (PubMed:19423663).</text>
</comment>
<comment type="domain">
    <text evidence="1">Consists mainly of a membrane-spanning beta-barrel formed by 19 beta-strands.</text>
</comment>
<comment type="PTM">
    <text evidence="3">Ubiquitinated by PRKN during mitophagy, leading to its degradation and enhancement of mitophagy. Deubiquitinated by USP30.</text>
</comment>
<comment type="similarity">
    <text evidence="8">Belongs to the eukaryotic mitochondrial porin family.</text>
</comment>
<keyword id="KW-0007">Acetylation</keyword>
<keyword id="KW-0025">Alternative splicing</keyword>
<keyword id="KW-0903">Direct protein sequencing</keyword>
<keyword id="KW-0406">Ion transport</keyword>
<keyword id="KW-1017">Isopeptide bond</keyword>
<keyword id="KW-0472">Membrane</keyword>
<keyword id="KW-0496">Mitochondrion</keyword>
<keyword id="KW-1000">Mitochondrion outer membrane</keyword>
<keyword id="KW-0520">NAD</keyword>
<keyword id="KW-0547">Nucleotide-binding</keyword>
<keyword id="KW-0597">Phosphoprotein</keyword>
<keyword id="KW-0626">Porin</keyword>
<keyword id="KW-1185">Reference proteome</keyword>
<keyword id="KW-0812">Transmembrane</keyword>
<keyword id="KW-1134">Transmembrane beta strand</keyword>
<keyword id="KW-0813">Transport</keyword>
<keyword id="KW-0832">Ubl conjugation</keyword>
<sequence>MCSTPTYCDLGKAAKDVFNKGYGFGMVKIDLKTKSCSGVEFSTSGHAYTDTGKASGNLETKYKVCNYGLIFTQKWNTDNTLGTEISWENKLAEGLKLTVDTIFVPNTGKKSGKLKASYRRDCFSVGSKVDIDFSGPTIYGWAVLAFEGWLAGYQMSFDTAKSKLCQNNFALGYKAEDFQLHTHVNDGTEFGGSIYQRVNEKIETSINLAWTAGSNNTRFGIAAKYRLDCRTSLSAKVNNASLIGLGYTQSLRPGVKLTLSALVDGKNFNAGGHKVGLGFELEA</sequence>
<protein>
    <recommendedName>
        <fullName evidence="8">Non-selective voltage-gated ion channel VDAC3</fullName>
        <shortName>VDAC-3</shortName>
        <shortName evidence="7">rVDAC3</shortName>
    </recommendedName>
    <alternativeName>
        <fullName>Outer mitochondrial membrane protein porin 3</fullName>
    </alternativeName>
</protein>
<dbReference type="EMBL" id="AB039664">
    <property type="protein sequence ID" value="BAB13475.1"/>
    <property type="molecule type" value="mRNA"/>
</dbReference>
<dbReference type="EMBL" id="AF268469">
    <property type="protein sequence ID" value="AAF80117.1"/>
    <property type="molecule type" value="mRNA"/>
</dbReference>
<dbReference type="EMBL" id="BC061780">
    <property type="protein sequence ID" value="AAH61780.1"/>
    <property type="molecule type" value="mRNA"/>
</dbReference>
<dbReference type="EMBL" id="AF048829">
    <property type="protein sequence ID" value="AAD22722.1"/>
    <property type="molecule type" value="mRNA"/>
</dbReference>
<dbReference type="EMBL" id="AF048830">
    <property type="protein sequence ID" value="AAD22723.1"/>
    <property type="molecule type" value="mRNA"/>
</dbReference>
<dbReference type="RefSeq" id="NP_112645.1">
    <property type="nucleotide sequence ID" value="NM_031355.1"/>
</dbReference>
<dbReference type="SMR" id="Q9R1Z0"/>
<dbReference type="BioGRID" id="249748">
    <property type="interactions" value="5"/>
</dbReference>
<dbReference type="FunCoup" id="Q9R1Z0">
    <property type="interactions" value="3156"/>
</dbReference>
<dbReference type="IntAct" id="Q9R1Z0">
    <property type="interactions" value="4"/>
</dbReference>
<dbReference type="MINT" id="Q9R1Z0"/>
<dbReference type="STRING" id="10116.ENSRNOP00000026197"/>
<dbReference type="CarbonylDB" id="Q9R1Z0"/>
<dbReference type="GlyGen" id="Q9R1Z0">
    <property type="glycosylation" value="1 site, 1 O-linked glycan (1 site)"/>
</dbReference>
<dbReference type="iPTMnet" id="Q9R1Z0"/>
<dbReference type="PhosphoSitePlus" id="Q9R1Z0"/>
<dbReference type="SwissPalm" id="Q9R1Z0"/>
<dbReference type="jPOST" id="Q9R1Z0"/>
<dbReference type="PaxDb" id="10116-ENSRNOP00000046203"/>
<dbReference type="DNASU" id="83532"/>
<dbReference type="GeneID" id="83532"/>
<dbReference type="KEGG" id="rno:83532"/>
<dbReference type="UCSC" id="RGD:621577">
    <molecule id="Q9R1Z0-1"/>
    <property type="organism name" value="rat"/>
</dbReference>
<dbReference type="AGR" id="RGD:621577"/>
<dbReference type="CTD" id="7419"/>
<dbReference type="RGD" id="621577">
    <property type="gene designation" value="Vdac3"/>
</dbReference>
<dbReference type="eggNOG" id="KOG3126">
    <property type="taxonomic scope" value="Eukaryota"/>
</dbReference>
<dbReference type="InParanoid" id="Q9R1Z0"/>
<dbReference type="OrthoDB" id="7827681at2759"/>
<dbReference type="Reactome" id="R-RNO-5205685">
    <property type="pathway name" value="PINK1-PRKN Mediated Mitophagy"/>
</dbReference>
<dbReference type="Reactome" id="R-RNO-5689880">
    <property type="pathway name" value="Ub-specific processing proteases"/>
</dbReference>
<dbReference type="PRO" id="PR:Q9R1Z0"/>
<dbReference type="Proteomes" id="UP000002494">
    <property type="component" value="Unplaced"/>
</dbReference>
<dbReference type="GO" id="GO:0016020">
    <property type="term" value="C:membrane"/>
    <property type="evidence" value="ECO:0000250"/>
    <property type="project" value="UniProtKB"/>
</dbReference>
<dbReference type="GO" id="GO:0005741">
    <property type="term" value="C:mitochondrial outer membrane"/>
    <property type="evidence" value="ECO:0000318"/>
    <property type="project" value="GO_Central"/>
</dbReference>
<dbReference type="GO" id="GO:0005739">
    <property type="term" value="C:mitochondrion"/>
    <property type="evidence" value="ECO:0000266"/>
    <property type="project" value="RGD"/>
</dbReference>
<dbReference type="GO" id="GO:0046930">
    <property type="term" value="C:pore complex"/>
    <property type="evidence" value="ECO:0007669"/>
    <property type="project" value="UniProtKB-KW"/>
</dbReference>
<dbReference type="GO" id="GO:0008021">
    <property type="term" value="C:synaptic vesicle"/>
    <property type="evidence" value="ECO:0000314"/>
    <property type="project" value="RGD"/>
</dbReference>
<dbReference type="GO" id="GO:0000166">
    <property type="term" value="F:nucleotide binding"/>
    <property type="evidence" value="ECO:0007669"/>
    <property type="project" value="UniProtKB-KW"/>
</dbReference>
<dbReference type="GO" id="GO:0015288">
    <property type="term" value="F:porin activity"/>
    <property type="evidence" value="ECO:0007669"/>
    <property type="project" value="UniProtKB-KW"/>
</dbReference>
<dbReference type="GO" id="GO:0008308">
    <property type="term" value="F:voltage-gated monoatomic anion channel activity"/>
    <property type="evidence" value="ECO:0000318"/>
    <property type="project" value="GO_Central"/>
</dbReference>
<dbReference type="GO" id="GO:0005244">
    <property type="term" value="F:voltage-gated monoatomic ion channel activity"/>
    <property type="evidence" value="ECO:0000266"/>
    <property type="project" value="RGD"/>
</dbReference>
<dbReference type="GO" id="GO:0001662">
    <property type="term" value="P:behavioral fear response"/>
    <property type="evidence" value="ECO:0000266"/>
    <property type="project" value="RGD"/>
</dbReference>
<dbReference type="GO" id="GO:0007268">
    <property type="term" value="P:chemical synaptic transmission"/>
    <property type="evidence" value="ECO:0000266"/>
    <property type="project" value="RGD"/>
</dbReference>
<dbReference type="GO" id="GO:0007612">
    <property type="term" value="P:learning"/>
    <property type="evidence" value="ECO:0000266"/>
    <property type="project" value="RGD"/>
</dbReference>
<dbReference type="GO" id="GO:0007270">
    <property type="term" value="P:neuron-neuron synaptic transmission"/>
    <property type="evidence" value="ECO:0000266"/>
    <property type="project" value="RGD"/>
</dbReference>
<dbReference type="GO" id="GO:0120317">
    <property type="term" value="P:sperm mitochondrial sheath assembly"/>
    <property type="evidence" value="ECO:0000250"/>
    <property type="project" value="UniProtKB"/>
</dbReference>
<dbReference type="GO" id="GO:0007283">
    <property type="term" value="P:spermatogenesis"/>
    <property type="evidence" value="ECO:0000250"/>
    <property type="project" value="UniProtKB"/>
</dbReference>
<dbReference type="CDD" id="cd07306">
    <property type="entry name" value="Porin3_VDAC"/>
    <property type="match status" value="1"/>
</dbReference>
<dbReference type="FunFam" id="2.40.160.10:FF:000001">
    <property type="entry name" value="Voltage-dependent anion-selective channel protein 2"/>
    <property type="match status" value="1"/>
</dbReference>
<dbReference type="Gene3D" id="2.40.160.10">
    <property type="entry name" value="Porin"/>
    <property type="match status" value="1"/>
</dbReference>
<dbReference type="InterPro" id="IPR023614">
    <property type="entry name" value="Porin_dom_sf"/>
</dbReference>
<dbReference type="InterPro" id="IPR001925">
    <property type="entry name" value="Porin_Euk"/>
</dbReference>
<dbReference type="InterPro" id="IPR027246">
    <property type="entry name" value="Porin_Euk/Tom40"/>
</dbReference>
<dbReference type="PANTHER" id="PTHR11743">
    <property type="entry name" value="VOLTAGE-DEPENDENT ANION-SELECTIVE CHANNEL"/>
    <property type="match status" value="1"/>
</dbReference>
<dbReference type="PANTHER" id="PTHR11743:SF28">
    <property type="entry name" value="VOLTAGE-DEPENDENT ANION-SELECTIVE CHANNEL PROTEIN 3"/>
    <property type="match status" value="1"/>
</dbReference>
<dbReference type="Pfam" id="PF01459">
    <property type="entry name" value="Porin_3"/>
    <property type="match status" value="1"/>
</dbReference>
<dbReference type="PRINTS" id="PR00185">
    <property type="entry name" value="EUKARYTPORIN"/>
</dbReference>
<dbReference type="PROSITE" id="PS00558">
    <property type="entry name" value="EUKARYOTIC_PORIN"/>
    <property type="match status" value="1"/>
</dbReference>
<organism>
    <name type="scientific">Rattus norvegicus</name>
    <name type="common">Rat</name>
    <dbReference type="NCBI Taxonomy" id="10116"/>
    <lineage>
        <taxon>Eukaryota</taxon>
        <taxon>Metazoa</taxon>
        <taxon>Chordata</taxon>
        <taxon>Craniata</taxon>
        <taxon>Vertebrata</taxon>
        <taxon>Euteleostomi</taxon>
        <taxon>Mammalia</taxon>
        <taxon>Eutheria</taxon>
        <taxon>Euarchontoglires</taxon>
        <taxon>Glires</taxon>
        <taxon>Rodentia</taxon>
        <taxon>Myomorpha</taxon>
        <taxon>Muroidea</taxon>
        <taxon>Muridae</taxon>
        <taxon>Murinae</taxon>
        <taxon>Rattus</taxon>
    </lineage>
</organism>